<dbReference type="EC" id="3.13.2.1"/>
<dbReference type="UniPathway" id="UPA00314">
    <property type="reaction ID" value="UER00076"/>
</dbReference>
<dbReference type="Proteomes" id="UP000694918">
    <property type="component" value="Unplaced"/>
</dbReference>
<dbReference type="GO" id="GO:0004013">
    <property type="term" value="F:adenosylhomocysteinase activity"/>
    <property type="evidence" value="ECO:0007669"/>
    <property type="project" value="RHEA"/>
</dbReference>
<dbReference type="GO" id="GO:0006730">
    <property type="term" value="P:one-carbon metabolic process"/>
    <property type="evidence" value="ECO:0007669"/>
    <property type="project" value="UniProtKB-KW"/>
</dbReference>
<reference key="1">
    <citation type="journal article" date="2006" name="Ann. Bot.">
        <title>Proteome profiling of Populus euphratica Oliv. upon heat stress.</title>
        <authorList>
            <person name="Ferreira S."/>
            <person name="Hjernoe K."/>
            <person name="Larsen M."/>
            <person name="Wingsle G."/>
            <person name="Larsen P."/>
            <person name="Fey S."/>
            <person name="Roepstorff P."/>
            <person name="Pais M.S."/>
        </authorList>
    </citation>
    <scope>PROTEIN SEQUENCE</scope>
    <source>
        <tissue>Leaf</tissue>
    </source>
</reference>
<comment type="function">
    <text evidence="1">Adenosylhomocysteine is a competitive inhibitor of S-adenosyl-L-methionine-dependent methyl transferase reactions; therefore adenosylhomocysteinase may play a key role in the control of methylations via regulation of the intracellular concentration of adenosylhomocysteine.</text>
</comment>
<comment type="catalytic activity">
    <reaction evidence="1">
        <text>S-adenosyl-L-homocysteine + H2O = L-homocysteine + adenosine</text>
        <dbReference type="Rhea" id="RHEA:21708"/>
        <dbReference type="ChEBI" id="CHEBI:15377"/>
        <dbReference type="ChEBI" id="CHEBI:16335"/>
        <dbReference type="ChEBI" id="CHEBI:57856"/>
        <dbReference type="ChEBI" id="CHEBI:58199"/>
        <dbReference type="EC" id="3.13.2.1"/>
    </reaction>
</comment>
<comment type="cofactor">
    <cofactor evidence="1">
        <name>NAD(+)</name>
        <dbReference type="ChEBI" id="CHEBI:57540"/>
    </cofactor>
    <text evidence="1">Binds 1 NAD(+) per subunit.</text>
</comment>
<comment type="pathway">
    <text>Amino-acid biosynthesis; L-homocysteine biosynthesis; L-homocysteine from S-adenosyl-L-homocysteine: step 1/1.</text>
</comment>
<comment type="subunit">
    <text evidence="2">Homotetramer.</text>
</comment>
<comment type="similarity">
    <text evidence="3">Belongs to the adenosylhomocysteinase family.</text>
</comment>
<organism>
    <name type="scientific">Populus euphratica</name>
    <name type="common">Euphrates poplar</name>
    <dbReference type="NCBI Taxonomy" id="75702"/>
    <lineage>
        <taxon>Eukaryota</taxon>
        <taxon>Viridiplantae</taxon>
        <taxon>Streptophyta</taxon>
        <taxon>Embryophyta</taxon>
        <taxon>Tracheophyta</taxon>
        <taxon>Spermatophyta</taxon>
        <taxon>Magnoliopsida</taxon>
        <taxon>eudicotyledons</taxon>
        <taxon>Gunneridae</taxon>
        <taxon>Pentapetalae</taxon>
        <taxon>rosids</taxon>
        <taxon>fabids</taxon>
        <taxon>Malpighiales</taxon>
        <taxon>Salicaceae</taxon>
        <taxon>Saliceae</taxon>
        <taxon>Populus</taxon>
    </lineage>
</organism>
<protein>
    <recommendedName>
        <fullName>Adenosylhomocysteinase 1</fullName>
        <shortName>AdoHcyase</shortName>
        <ecNumber>3.13.2.1</ecNumber>
    </recommendedName>
    <alternativeName>
        <fullName>S-adenosyl-L-homocysteine hydrolase</fullName>
    </alternativeName>
</protein>
<proteinExistence type="evidence at protein level"/>
<sequence>TEFGPSQPFKGAK</sequence>
<evidence type="ECO:0000250" key="1">
    <source>
        <dbReference type="UniProtKB" id="P68173"/>
    </source>
</evidence>
<evidence type="ECO:0000250" key="2">
    <source>
        <dbReference type="UniProtKB" id="P93253"/>
    </source>
</evidence>
<evidence type="ECO:0000255" key="3"/>
<keyword id="KW-0903">Direct protein sequencing</keyword>
<keyword id="KW-0378">Hydrolase</keyword>
<keyword id="KW-0520">NAD</keyword>
<keyword id="KW-0554">One-carbon metabolism</keyword>
<keyword id="KW-1185">Reference proteome</keyword>
<feature type="chain" id="PRO_0000116930" description="Adenosylhomocysteinase 1">
    <location>
        <begin position="1" status="less than"/>
        <end position="13" status="greater than"/>
    </location>
</feature>
<feature type="non-terminal residue">
    <location>
        <position position="1"/>
    </location>
</feature>
<feature type="non-terminal residue">
    <location>
        <position position="13"/>
    </location>
</feature>
<accession>P84533</accession>
<name>SAHH1_POPEU</name>